<feature type="chain" id="PRO_0000186906" description="Uncharacterized protein aq_1176">
    <location>
        <begin position="1"/>
        <end position="111"/>
    </location>
</feature>
<protein>
    <recommendedName>
        <fullName>Uncharacterized protein aq_1176</fullName>
    </recommendedName>
</protein>
<gene>
    <name type="ordered locus">aq_1176</name>
</gene>
<reference key="1">
    <citation type="journal article" date="1998" name="Nature">
        <title>The complete genome of the hyperthermophilic bacterium Aquifex aeolicus.</title>
        <authorList>
            <person name="Deckert G."/>
            <person name="Warren P.V."/>
            <person name="Gaasterland T."/>
            <person name="Young W.G."/>
            <person name="Lenox A.L."/>
            <person name="Graham D.E."/>
            <person name="Overbeek R."/>
            <person name="Snead M.A."/>
            <person name="Keller M."/>
            <person name="Aujay M."/>
            <person name="Huber R."/>
            <person name="Feldman R.A."/>
            <person name="Short J.M."/>
            <person name="Olsen G.J."/>
            <person name="Swanson R.V."/>
        </authorList>
    </citation>
    <scope>NUCLEOTIDE SEQUENCE [LARGE SCALE GENOMIC DNA]</scope>
    <source>
        <strain>VF5</strain>
    </source>
</reference>
<organism>
    <name type="scientific">Aquifex aeolicus (strain VF5)</name>
    <dbReference type="NCBI Taxonomy" id="224324"/>
    <lineage>
        <taxon>Bacteria</taxon>
        <taxon>Pseudomonadati</taxon>
        <taxon>Aquificota</taxon>
        <taxon>Aquificia</taxon>
        <taxon>Aquificales</taxon>
        <taxon>Aquificaceae</taxon>
        <taxon>Aquifex</taxon>
    </lineage>
</organism>
<sequence length="111" mass="12958">MATKAIPKEQWEKYFDNLSKNLPAVEVQLEVVDKEIGDQVEVEYSPLLGLSYDPKDDVFEIQFRETHDHLIYHPKEIYVEEEDGKITTIEVVDKEGTRYILRIKPAIPLPE</sequence>
<name>Y1176_AQUAE</name>
<dbReference type="EMBL" id="AE000657">
    <property type="protein sequence ID" value="AAC07206.1"/>
    <property type="molecule type" value="Genomic_DNA"/>
</dbReference>
<dbReference type="PIR" id="B70401">
    <property type="entry name" value="B70401"/>
</dbReference>
<dbReference type="RefSeq" id="NP_213801.1">
    <property type="nucleotide sequence ID" value="NC_000918.1"/>
</dbReference>
<dbReference type="RefSeq" id="WP_010880739.1">
    <property type="nucleotide sequence ID" value="NC_000918.1"/>
</dbReference>
<dbReference type="SMR" id="O67237"/>
<dbReference type="STRING" id="224324.aq_1176"/>
<dbReference type="EnsemblBacteria" id="AAC07206">
    <property type="protein sequence ID" value="AAC07206"/>
    <property type="gene ID" value="aq_1176"/>
</dbReference>
<dbReference type="KEGG" id="aae:aq_1176"/>
<dbReference type="PATRIC" id="fig|224324.8.peg.914"/>
<dbReference type="eggNOG" id="ENOG5032RW5">
    <property type="taxonomic scope" value="Bacteria"/>
</dbReference>
<dbReference type="HOGENOM" id="CLU_137422_0_0_0"/>
<dbReference type="InParanoid" id="O67237"/>
<dbReference type="OrthoDB" id="7428502at2"/>
<dbReference type="Proteomes" id="UP000000798">
    <property type="component" value="Chromosome"/>
</dbReference>
<dbReference type="InterPro" id="IPR035223">
    <property type="entry name" value="DUF5335"/>
</dbReference>
<dbReference type="Pfam" id="PF17269">
    <property type="entry name" value="DUF5335"/>
    <property type="match status" value="1"/>
</dbReference>
<keyword id="KW-1185">Reference proteome</keyword>
<proteinExistence type="predicted"/>
<accession>O67237</accession>